<protein>
    <recommendedName>
        <fullName evidence="2">Cytochrome f</fullName>
    </recommendedName>
</protein>
<dbReference type="EMBL" id="EF380351">
    <property type="protein sequence ID" value="ABQ45262.1"/>
    <property type="molecule type" value="Genomic_DNA"/>
</dbReference>
<dbReference type="RefSeq" id="YP_001294197.1">
    <property type="nucleotide sequence ID" value="NC_009599.1"/>
</dbReference>
<dbReference type="SMR" id="A6MM49"/>
<dbReference type="GeneID" id="5236872"/>
<dbReference type="GO" id="GO:0009535">
    <property type="term" value="C:chloroplast thylakoid membrane"/>
    <property type="evidence" value="ECO:0007669"/>
    <property type="project" value="UniProtKB-SubCell"/>
</dbReference>
<dbReference type="GO" id="GO:0009055">
    <property type="term" value="F:electron transfer activity"/>
    <property type="evidence" value="ECO:0007669"/>
    <property type="project" value="UniProtKB-UniRule"/>
</dbReference>
<dbReference type="GO" id="GO:0020037">
    <property type="term" value="F:heme binding"/>
    <property type="evidence" value="ECO:0007669"/>
    <property type="project" value="InterPro"/>
</dbReference>
<dbReference type="GO" id="GO:0005506">
    <property type="term" value="F:iron ion binding"/>
    <property type="evidence" value="ECO:0007669"/>
    <property type="project" value="InterPro"/>
</dbReference>
<dbReference type="GO" id="GO:0015979">
    <property type="term" value="P:photosynthesis"/>
    <property type="evidence" value="ECO:0007669"/>
    <property type="project" value="UniProtKB-UniRule"/>
</dbReference>
<dbReference type="FunFam" id="1.20.5.700:FF:000001">
    <property type="entry name" value="Cytochrome f"/>
    <property type="match status" value="1"/>
</dbReference>
<dbReference type="FunFam" id="2.40.50.100:FF:000007">
    <property type="entry name" value="Cytochrome f"/>
    <property type="match status" value="1"/>
</dbReference>
<dbReference type="FunFam" id="2.60.40.830:FF:000001">
    <property type="entry name" value="Cytochrome f"/>
    <property type="match status" value="1"/>
</dbReference>
<dbReference type="Gene3D" id="2.40.50.100">
    <property type="match status" value="1"/>
</dbReference>
<dbReference type="Gene3D" id="2.60.40.830">
    <property type="entry name" value="Cytochrome f large domain"/>
    <property type="match status" value="1"/>
</dbReference>
<dbReference type="Gene3D" id="1.20.5.700">
    <property type="entry name" value="Single helix bin"/>
    <property type="match status" value="1"/>
</dbReference>
<dbReference type="HAMAP" id="MF_00610">
    <property type="entry name" value="Cytb6_f_cytF"/>
    <property type="match status" value="1"/>
</dbReference>
<dbReference type="InterPro" id="IPR024058">
    <property type="entry name" value="Cyt-f_TM"/>
</dbReference>
<dbReference type="InterPro" id="IPR002325">
    <property type="entry name" value="Cyt_f"/>
</dbReference>
<dbReference type="InterPro" id="IPR024094">
    <property type="entry name" value="Cyt_f_lg_dom"/>
</dbReference>
<dbReference type="InterPro" id="IPR036826">
    <property type="entry name" value="Cyt_f_lg_dom_sf"/>
</dbReference>
<dbReference type="InterPro" id="IPR011054">
    <property type="entry name" value="Rudment_hybrid_motif"/>
</dbReference>
<dbReference type="PANTHER" id="PTHR33288">
    <property type="match status" value="1"/>
</dbReference>
<dbReference type="PANTHER" id="PTHR33288:SF10">
    <property type="entry name" value="CYTOCHROME F"/>
    <property type="match status" value="1"/>
</dbReference>
<dbReference type="Pfam" id="PF01333">
    <property type="entry name" value="Apocytochr_F_C"/>
    <property type="match status" value="1"/>
</dbReference>
<dbReference type="Pfam" id="PF16639">
    <property type="entry name" value="Apocytochr_F_N"/>
    <property type="match status" value="1"/>
</dbReference>
<dbReference type="PRINTS" id="PR00610">
    <property type="entry name" value="CYTOCHROMEF"/>
</dbReference>
<dbReference type="SUPFAM" id="SSF103431">
    <property type="entry name" value="Cytochrome f subunit of the cytochrome b6f complex, transmembrane anchor"/>
    <property type="match status" value="1"/>
</dbReference>
<dbReference type="SUPFAM" id="SSF49441">
    <property type="entry name" value="Cytochrome f, large domain"/>
    <property type="match status" value="1"/>
</dbReference>
<dbReference type="SUPFAM" id="SSF51246">
    <property type="entry name" value="Rudiment single hybrid motif"/>
    <property type="match status" value="1"/>
</dbReference>
<dbReference type="PROSITE" id="PS51010">
    <property type="entry name" value="CYTF"/>
    <property type="match status" value="1"/>
</dbReference>
<reference key="1">
    <citation type="journal article" date="2007" name="Mol. Phylogenet. Evol.">
        <title>Phylogenetic and evolutionary implications of complete chloroplast genome sequences of four early-diverging angiosperms: Buxus (Buxaceae), Chloranthus (Chloranthaceae), Dioscorea (Dioscoreaceae), and Illicium (Schisandraceae).</title>
        <authorList>
            <person name="Hansen D.R."/>
            <person name="Dastidar S.G."/>
            <person name="Cai Z."/>
            <person name="Penaflor C."/>
            <person name="Kuehl J.V."/>
            <person name="Boore J.L."/>
            <person name="Jansen R.K."/>
        </authorList>
    </citation>
    <scope>NUCLEOTIDE SEQUENCE [LARGE SCALE GENOMIC DNA]</scope>
</reference>
<feature type="signal peptide" evidence="2">
    <location>
        <begin position="1"/>
        <end position="35"/>
    </location>
</feature>
<feature type="chain" id="PRO_0000342049" description="Cytochrome f">
    <location>
        <begin position="36"/>
        <end position="320"/>
    </location>
</feature>
<feature type="transmembrane region" description="Helical" evidence="2">
    <location>
        <begin position="286"/>
        <end position="306"/>
    </location>
</feature>
<feature type="binding site" description="axial binding residue" evidence="2">
    <location>
        <position position="36"/>
    </location>
    <ligand>
        <name>heme</name>
        <dbReference type="ChEBI" id="CHEBI:30413"/>
    </ligand>
    <ligandPart>
        <name>Fe</name>
        <dbReference type="ChEBI" id="CHEBI:18248"/>
    </ligandPart>
</feature>
<feature type="binding site" description="covalent" evidence="2">
    <location>
        <position position="56"/>
    </location>
    <ligand>
        <name>heme</name>
        <dbReference type="ChEBI" id="CHEBI:30413"/>
    </ligand>
</feature>
<feature type="binding site" description="covalent" evidence="2">
    <location>
        <position position="59"/>
    </location>
    <ligand>
        <name>heme</name>
        <dbReference type="ChEBI" id="CHEBI:30413"/>
    </ligand>
</feature>
<feature type="binding site" description="axial binding residue" evidence="2">
    <location>
        <position position="60"/>
    </location>
    <ligand>
        <name>heme</name>
        <dbReference type="ChEBI" id="CHEBI:30413"/>
    </ligand>
    <ligandPart>
        <name>Fe</name>
        <dbReference type="ChEBI" id="CHEBI:18248"/>
    </ligandPart>
</feature>
<keyword id="KW-0150">Chloroplast</keyword>
<keyword id="KW-0249">Electron transport</keyword>
<keyword id="KW-0349">Heme</keyword>
<keyword id="KW-0408">Iron</keyword>
<keyword id="KW-0472">Membrane</keyword>
<keyword id="KW-0479">Metal-binding</keyword>
<keyword id="KW-0602">Photosynthesis</keyword>
<keyword id="KW-0934">Plastid</keyword>
<keyword id="KW-0732">Signal</keyword>
<keyword id="KW-0793">Thylakoid</keyword>
<keyword id="KW-0812">Transmembrane</keyword>
<keyword id="KW-1133">Transmembrane helix</keyword>
<keyword id="KW-0813">Transport</keyword>
<gene>
    <name evidence="2" type="primary">petA</name>
</gene>
<proteinExistence type="inferred from homology"/>
<geneLocation type="chloroplast"/>
<accession>A6MM49</accession>
<comment type="function">
    <text evidence="2">Component of the cytochrome b6-f complex, which mediates electron transfer between photosystem II (PSII) and photosystem I (PSI), cyclic electron flow around PSI, and state transitions.</text>
</comment>
<comment type="cofactor">
    <cofactor evidence="2">
        <name>heme</name>
        <dbReference type="ChEBI" id="CHEBI:30413"/>
    </cofactor>
    <text evidence="2">Binds 1 heme group covalently.</text>
</comment>
<comment type="subunit">
    <text evidence="1">The 4 large subunits of the cytochrome b6-f complex are cytochrome b6, subunit IV (17 kDa polypeptide, petD), cytochrome f and the Rieske protein, while the 4 small subunits are PetG, PetL, PetM and PetN. The complex functions as a dimer (By similarity).</text>
</comment>
<comment type="subcellular location">
    <subcellularLocation>
        <location evidence="2">Plastid</location>
        <location evidence="2">Chloroplast thylakoid membrane</location>
        <topology evidence="2">Single-pass membrane protein</topology>
    </subcellularLocation>
</comment>
<comment type="similarity">
    <text evidence="2">Belongs to the cytochrome f family.</text>
</comment>
<organism>
    <name type="scientific">Buxus microphylla</name>
    <name type="common">Littleleaf boxwood</name>
    <name type="synonym">Japanese boxwood</name>
    <dbReference type="NCBI Taxonomy" id="153571"/>
    <lineage>
        <taxon>Eukaryota</taxon>
        <taxon>Viridiplantae</taxon>
        <taxon>Streptophyta</taxon>
        <taxon>Embryophyta</taxon>
        <taxon>Tracheophyta</taxon>
        <taxon>Spermatophyta</taxon>
        <taxon>Magnoliopsida</taxon>
        <taxon>Buxales</taxon>
        <taxon>Buxaceae</taxon>
        <taxon>Buxus</taxon>
    </lineage>
</organism>
<evidence type="ECO:0000250" key="1"/>
<evidence type="ECO:0000255" key="2">
    <source>
        <dbReference type="HAMAP-Rule" id="MF_00610"/>
    </source>
</evidence>
<sequence length="320" mass="35261">MQTRNTFFWIKEQMTRSISVSIIVYVITQTSISNAYPIFAQQGYENPREATGRIVCANCHLANKPLDIEVPQAVLPDTVFEAVVRIPYDMQLKQVLANGKKGALNVGAVLILPEGFELAPPDRISPEMKEKIGNLSFQSYRPTKKNILVIGPVPGQKYSEITFPILSPDPATKKDVHFLKYPIYVGGNRGRGQIYPDGSKSNNTVYNATAAGIISKIIRKEKGGYEITIADASDGHQVVNIIPPGPELLVSEGESIKLDQPLTSNPNVGGFGQGDAEIVLQDPLRVQGLLFFFASVILAQIFLVLKKKQFEKVQLSEMNF</sequence>
<name>CYF_BUXMI</name>